<gene>
    <name type="primary">mch</name>
</gene>
<keyword id="KW-0963">Cytoplasm</keyword>
<keyword id="KW-0378">Hydrolase</keyword>
<keyword id="KW-0554">One-carbon metabolism</keyword>
<accession>Q9RPD4</accession>
<feature type="chain" id="PRO_0000140896" description="Methenyltetrahydromethanopterin cyclohydrolase">
    <location>
        <begin position="1" status="less than"/>
        <end position="260"/>
    </location>
</feature>
<feature type="non-terminal residue">
    <location>
        <position position="1"/>
    </location>
</feature>
<name>MCH_METTR</name>
<dbReference type="EC" id="3.5.4.27"/>
<dbReference type="EMBL" id="AF162786">
    <property type="protein sequence ID" value="AAD56174.1"/>
    <property type="molecule type" value="Genomic_DNA"/>
</dbReference>
<dbReference type="SMR" id="Q9RPD4"/>
<dbReference type="UniPathway" id="UPA00562">
    <property type="reaction ID" value="UER00703"/>
</dbReference>
<dbReference type="GO" id="GO:0005737">
    <property type="term" value="C:cytoplasm"/>
    <property type="evidence" value="ECO:0007669"/>
    <property type="project" value="UniProtKB-SubCell"/>
</dbReference>
<dbReference type="GO" id="GO:0018759">
    <property type="term" value="F:methenyltetrahydromethanopterin cyclohydrolase activity"/>
    <property type="evidence" value="ECO:0007669"/>
    <property type="project" value="UniProtKB-EC"/>
</dbReference>
<dbReference type="GO" id="GO:0046294">
    <property type="term" value="P:formaldehyde catabolic process"/>
    <property type="evidence" value="ECO:0007669"/>
    <property type="project" value="UniProtKB-UniPathway"/>
</dbReference>
<dbReference type="GO" id="GO:0006730">
    <property type="term" value="P:one-carbon metabolic process"/>
    <property type="evidence" value="ECO:0007669"/>
    <property type="project" value="UniProtKB-KW"/>
</dbReference>
<dbReference type="Gene3D" id="3.10.340.11">
    <property type="entry name" value="Methenyltetrahydromethanopterin Cyclohydrolase, Chain A, domain 1"/>
    <property type="match status" value="1"/>
</dbReference>
<dbReference type="Gene3D" id="3.30.1030.10">
    <property type="entry name" value="Methenyltetrahydromethanopterin Cyclohydrolase, Chain A, domain 2"/>
    <property type="match status" value="1"/>
</dbReference>
<dbReference type="HAMAP" id="MF_00486">
    <property type="entry name" value="McH"/>
    <property type="match status" value="1"/>
</dbReference>
<dbReference type="InterPro" id="IPR003209">
    <property type="entry name" value="METHMP_CycHdrlase"/>
</dbReference>
<dbReference type="NCBIfam" id="TIGR03120">
    <property type="entry name" value="one_C_mch"/>
    <property type="match status" value="1"/>
</dbReference>
<dbReference type="Pfam" id="PF02289">
    <property type="entry name" value="MCH"/>
    <property type="match status" value="1"/>
</dbReference>
<dbReference type="SUPFAM" id="SSF56199">
    <property type="entry name" value="Methenyltetrahydromethanopterin cyclohydrolase"/>
    <property type="match status" value="1"/>
</dbReference>
<comment type="function">
    <text evidence="1">Catalyzes the hydrolysis of methenyl-H(4)MPT(+) to 5-formyl-H(4)MPT.</text>
</comment>
<comment type="catalytic activity">
    <reaction>
        <text>5,10-methenyl-5,6,7,8-tetrahydromethanopterin + H2O = N(5)-formyl-5,6,7,8-tetrahydromethanopterin + H(+)</text>
        <dbReference type="Rhea" id="RHEA:19053"/>
        <dbReference type="ChEBI" id="CHEBI:15377"/>
        <dbReference type="ChEBI" id="CHEBI:15378"/>
        <dbReference type="ChEBI" id="CHEBI:58018"/>
        <dbReference type="ChEBI" id="CHEBI:58337"/>
        <dbReference type="EC" id="3.5.4.27"/>
    </reaction>
</comment>
<comment type="pathway">
    <text>One-carbon metabolism; formaldehyde degradation; formate from formaldehyde (H(4)MPT route): step 3/5.</text>
</comment>
<comment type="subcellular location">
    <subcellularLocation>
        <location evidence="1">Cytoplasm</location>
    </subcellularLocation>
</comment>
<comment type="similarity">
    <text evidence="2">Belongs to the MCH family.</text>
</comment>
<organism>
    <name type="scientific">Methylosinus trichosporium</name>
    <dbReference type="NCBI Taxonomy" id="426"/>
    <lineage>
        <taxon>Bacteria</taxon>
        <taxon>Pseudomonadati</taxon>
        <taxon>Pseudomonadota</taxon>
        <taxon>Alphaproteobacteria</taxon>
        <taxon>Hyphomicrobiales</taxon>
        <taxon>Methylocystaceae</taxon>
        <taxon>Methylosinus</taxon>
    </lineage>
</organism>
<protein>
    <recommendedName>
        <fullName>Methenyltetrahydromethanopterin cyclohydrolase</fullName>
        <ecNumber>3.5.4.27</ecNumber>
    </recommendedName>
    <alternativeName>
        <fullName>Methenyl-H4MPT cyclohydrolase</fullName>
    </alternativeName>
</protein>
<reference key="1">
    <citation type="journal article" date="1999" name="J. Bacteriol.">
        <title>Distribution of tetrahydromethanopterin-dependent enzymes in methylotrophic bacteria and phylogeny of methenyl tetrahydromethanopterin cyclohydrolases.</title>
        <authorList>
            <person name="Vorholt J.A."/>
            <person name="Chistoserdova L.V."/>
            <person name="Stolyar S.M."/>
            <person name="Thauer R.K."/>
            <person name="Lidstrom M.E."/>
        </authorList>
    </citation>
    <scope>NUCLEOTIDE SEQUENCE [GENOMIC DNA]</scope>
    <source>
        <strain>ATCC 35070 / NCIMB 11131 / ACM 3311 / OB3b</strain>
    </source>
</reference>
<proteinExistence type="inferred from homology"/>
<evidence type="ECO:0000250" key="1"/>
<evidence type="ECO:0000305" key="2"/>
<sequence length="260" mass="27622">ICLGGLGKVTLAPAPGQTNWPFWLTVTSNDPVVACLASQYAGWSLSHEKFFALGSGPGRSLARKEPLFQELPYEDSASRATIVLEAGAPPPEPVVAKVAESCGVSPDKLAFIYAPTQSLAGSVQVVGRVLEVALHKAHELKFPLEHIVDGIATAPLSPPHPDFVTAMGRTNDAIIYSGRAHLFVRGSAEAAKALAEKLPSSNSRDYGRPFAEIFKAYKGEFYKIDPSLFSPAEAIVTAVETGETFRAGAIDEKLLDASFG</sequence>